<name>EFTU_CLOBM</name>
<feature type="chain" id="PRO_0000337359" description="Elongation factor Tu">
    <location>
        <begin position="1"/>
        <end position="397"/>
    </location>
</feature>
<feature type="domain" description="tr-type G">
    <location>
        <begin position="10"/>
        <end position="206"/>
    </location>
</feature>
<feature type="region of interest" description="G1" evidence="1">
    <location>
        <begin position="19"/>
        <end position="26"/>
    </location>
</feature>
<feature type="region of interest" description="G2" evidence="1">
    <location>
        <begin position="60"/>
        <end position="64"/>
    </location>
</feature>
<feature type="region of interest" description="G3" evidence="1">
    <location>
        <begin position="81"/>
        <end position="84"/>
    </location>
</feature>
<feature type="region of interest" description="G4" evidence="1">
    <location>
        <begin position="136"/>
        <end position="139"/>
    </location>
</feature>
<feature type="region of interest" description="G5" evidence="1">
    <location>
        <begin position="174"/>
        <end position="176"/>
    </location>
</feature>
<feature type="binding site" evidence="2">
    <location>
        <begin position="19"/>
        <end position="26"/>
    </location>
    <ligand>
        <name>GTP</name>
        <dbReference type="ChEBI" id="CHEBI:37565"/>
    </ligand>
</feature>
<feature type="binding site" evidence="2">
    <location>
        <position position="26"/>
    </location>
    <ligand>
        <name>Mg(2+)</name>
        <dbReference type="ChEBI" id="CHEBI:18420"/>
    </ligand>
</feature>
<feature type="binding site" evidence="2">
    <location>
        <begin position="81"/>
        <end position="85"/>
    </location>
    <ligand>
        <name>GTP</name>
        <dbReference type="ChEBI" id="CHEBI:37565"/>
    </ligand>
</feature>
<feature type="binding site" evidence="2">
    <location>
        <begin position="136"/>
        <end position="139"/>
    </location>
    <ligand>
        <name>GTP</name>
        <dbReference type="ChEBI" id="CHEBI:37565"/>
    </ligand>
</feature>
<comment type="function">
    <text evidence="2">GTP hydrolase that promotes the GTP-dependent binding of aminoacyl-tRNA to the A-site of ribosomes during protein biosynthesis.</text>
</comment>
<comment type="catalytic activity">
    <reaction evidence="2">
        <text>GTP + H2O = GDP + phosphate + H(+)</text>
        <dbReference type="Rhea" id="RHEA:19669"/>
        <dbReference type="ChEBI" id="CHEBI:15377"/>
        <dbReference type="ChEBI" id="CHEBI:15378"/>
        <dbReference type="ChEBI" id="CHEBI:37565"/>
        <dbReference type="ChEBI" id="CHEBI:43474"/>
        <dbReference type="ChEBI" id="CHEBI:58189"/>
        <dbReference type="EC" id="3.6.5.3"/>
    </reaction>
    <physiologicalReaction direction="left-to-right" evidence="2">
        <dbReference type="Rhea" id="RHEA:19670"/>
    </physiologicalReaction>
</comment>
<comment type="subunit">
    <text evidence="2">Monomer.</text>
</comment>
<comment type="subcellular location">
    <subcellularLocation>
        <location evidence="2">Cytoplasm</location>
    </subcellularLocation>
</comment>
<comment type="similarity">
    <text evidence="2">Belongs to the TRAFAC class translation factor GTPase superfamily. Classic translation factor GTPase family. EF-Tu/EF-1A subfamily.</text>
</comment>
<sequence length="397" mass="43526">MAKAKFERSKPHVNIGTIGHVDHGKTTLTAAITTVLAQKGGASATKYDEIDKAPEEKERGITINTSHVEYETANRHYAHVDCPGHADYVKNMITGAAQMDGAILVVSAADGPMPQTREHILLASRVGVQYIVVFLNKADQVDDPELIELVEMEVRELLNEYGFPGDDTPIVVGSALEVLENQDNAEKTKCIDELMEAIDSYIPTPERATDQPFLMPVEDVFTITGRGTVATGRVERGVLHTGDEVELIGMKEEITKTVCTGIEMFRKILDEAMAGDNIGALLRGIQRDEIQRGQVLAKPGSITPHKKFVGQVYVLKKEEGGRHTPFFNGYRPQFYFRTTDVTGSINLPEGVEMVMPGDHIDMAVELITPVAMHENLRFAIREGGRTVGSGVVTTISE</sequence>
<dbReference type="EC" id="3.6.5.3" evidence="2"/>
<dbReference type="EMBL" id="CP000962">
    <property type="protein sequence ID" value="ACA55158.1"/>
    <property type="molecule type" value="Genomic_DNA"/>
</dbReference>
<dbReference type="EMBL" id="CP000962">
    <property type="protein sequence ID" value="ACA56558.1"/>
    <property type="molecule type" value="Genomic_DNA"/>
</dbReference>
<dbReference type="RefSeq" id="WP_012343179.1">
    <property type="nucleotide sequence ID" value="NC_010520.1"/>
</dbReference>
<dbReference type="SMR" id="B1KSM7"/>
<dbReference type="KEGG" id="cbl:CLK_2926"/>
<dbReference type="KEGG" id="cbl:CLK_2940"/>
<dbReference type="HOGENOM" id="CLU_007265_0_0_9"/>
<dbReference type="GO" id="GO:0005737">
    <property type="term" value="C:cytoplasm"/>
    <property type="evidence" value="ECO:0007669"/>
    <property type="project" value="UniProtKB-SubCell"/>
</dbReference>
<dbReference type="GO" id="GO:0005525">
    <property type="term" value="F:GTP binding"/>
    <property type="evidence" value="ECO:0007669"/>
    <property type="project" value="UniProtKB-UniRule"/>
</dbReference>
<dbReference type="GO" id="GO:0003924">
    <property type="term" value="F:GTPase activity"/>
    <property type="evidence" value="ECO:0007669"/>
    <property type="project" value="InterPro"/>
</dbReference>
<dbReference type="GO" id="GO:0003746">
    <property type="term" value="F:translation elongation factor activity"/>
    <property type="evidence" value="ECO:0007669"/>
    <property type="project" value="UniProtKB-UniRule"/>
</dbReference>
<dbReference type="CDD" id="cd01884">
    <property type="entry name" value="EF_Tu"/>
    <property type="match status" value="1"/>
</dbReference>
<dbReference type="CDD" id="cd03697">
    <property type="entry name" value="EFTU_II"/>
    <property type="match status" value="1"/>
</dbReference>
<dbReference type="CDD" id="cd03707">
    <property type="entry name" value="EFTU_III"/>
    <property type="match status" value="1"/>
</dbReference>
<dbReference type="FunFam" id="2.40.30.10:FF:000001">
    <property type="entry name" value="Elongation factor Tu"/>
    <property type="match status" value="1"/>
</dbReference>
<dbReference type="FunFam" id="3.40.50.300:FF:000003">
    <property type="entry name" value="Elongation factor Tu"/>
    <property type="match status" value="1"/>
</dbReference>
<dbReference type="Gene3D" id="3.40.50.300">
    <property type="entry name" value="P-loop containing nucleotide triphosphate hydrolases"/>
    <property type="match status" value="1"/>
</dbReference>
<dbReference type="Gene3D" id="2.40.30.10">
    <property type="entry name" value="Translation factors"/>
    <property type="match status" value="2"/>
</dbReference>
<dbReference type="HAMAP" id="MF_00118_B">
    <property type="entry name" value="EF_Tu_B"/>
    <property type="match status" value="1"/>
</dbReference>
<dbReference type="InterPro" id="IPR041709">
    <property type="entry name" value="EF-Tu_GTP-bd"/>
</dbReference>
<dbReference type="InterPro" id="IPR050055">
    <property type="entry name" value="EF-Tu_GTPase"/>
</dbReference>
<dbReference type="InterPro" id="IPR004161">
    <property type="entry name" value="EFTu-like_2"/>
</dbReference>
<dbReference type="InterPro" id="IPR033720">
    <property type="entry name" value="EFTU_2"/>
</dbReference>
<dbReference type="InterPro" id="IPR031157">
    <property type="entry name" value="G_TR_CS"/>
</dbReference>
<dbReference type="InterPro" id="IPR027417">
    <property type="entry name" value="P-loop_NTPase"/>
</dbReference>
<dbReference type="InterPro" id="IPR005225">
    <property type="entry name" value="Small_GTP-bd"/>
</dbReference>
<dbReference type="InterPro" id="IPR000795">
    <property type="entry name" value="T_Tr_GTP-bd_dom"/>
</dbReference>
<dbReference type="InterPro" id="IPR009000">
    <property type="entry name" value="Transl_B-barrel_sf"/>
</dbReference>
<dbReference type="InterPro" id="IPR009001">
    <property type="entry name" value="Transl_elong_EF1A/Init_IF2_C"/>
</dbReference>
<dbReference type="InterPro" id="IPR004541">
    <property type="entry name" value="Transl_elong_EFTu/EF1A_bac/org"/>
</dbReference>
<dbReference type="InterPro" id="IPR004160">
    <property type="entry name" value="Transl_elong_EFTu/EF1A_C"/>
</dbReference>
<dbReference type="NCBIfam" id="TIGR00485">
    <property type="entry name" value="EF-Tu"/>
    <property type="match status" value="1"/>
</dbReference>
<dbReference type="NCBIfam" id="NF000766">
    <property type="entry name" value="PRK00049.1"/>
    <property type="match status" value="1"/>
</dbReference>
<dbReference type="NCBIfam" id="NF009372">
    <property type="entry name" value="PRK12735.1"/>
    <property type="match status" value="1"/>
</dbReference>
<dbReference type="NCBIfam" id="NF009373">
    <property type="entry name" value="PRK12736.1"/>
    <property type="match status" value="1"/>
</dbReference>
<dbReference type="NCBIfam" id="TIGR00231">
    <property type="entry name" value="small_GTP"/>
    <property type="match status" value="1"/>
</dbReference>
<dbReference type="PANTHER" id="PTHR43721:SF22">
    <property type="entry name" value="ELONGATION FACTOR TU, MITOCHONDRIAL"/>
    <property type="match status" value="1"/>
</dbReference>
<dbReference type="PANTHER" id="PTHR43721">
    <property type="entry name" value="ELONGATION FACTOR TU-RELATED"/>
    <property type="match status" value="1"/>
</dbReference>
<dbReference type="Pfam" id="PF00009">
    <property type="entry name" value="GTP_EFTU"/>
    <property type="match status" value="1"/>
</dbReference>
<dbReference type="Pfam" id="PF03144">
    <property type="entry name" value="GTP_EFTU_D2"/>
    <property type="match status" value="1"/>
</dbReference>
<dbReference type="Pfam" id="PF03143">
    <property type="entry name" value="GTP_EFTU_D3"/>
    <property type="match status" value="1"/>
</dbReference>
<dbReference type="PRINTS" id="PR00315">
    <property type="entry name" value="ELONGATNFCT"/>
</dbReference>
<dbReference type="SUPFAM" id="SSF50465">
    <property type="entry name" value="EF-Tu/eEF-1alpha/eIF2-gamma C-terminal domain"/>
    <property type="match status" value="1"/>
</dbReference>
<dbReference type="SUPFAM" id="SSF52540">
    <property type="entry name" value="P-loop containing nucleoside triphosphate hydrolases"/>
    <property type="match status" value="1"/>
</dbReference>
<dbReference type="SUPFAM" id="SSF50447">
    <property type="entry name" value="Translation proteins"/>
    <property type="match status" value="1"/>
</dbReference>
<dbReference type="PROSITE" id="PS00301">
    <property type="entry name" value="G_TR_1"/>
    <property type="match status" value="1"/>
</dbReference>
<dbReference type="PROSITE" id="PS51722">
    <property type="entry name" value="G_TR_2"/>
    <property type="match status" value="1"/>
</dbReference>
<reference key="1">
    <citation type="journal article" date="2007" name="PLoS ONE">
        <title>Analysis of the neurotoxin complex genes in Clostridium botulinum A1-A4 and B1 strains: BoNT/A3, /Ba4 and /B1 clusters are located within plasmids.</title>
        <authorList>
            <person name="Smith T.J."/>
            <person name="Hill K.K."/>
            <person name="Foley B.T."/>
            <person name="Detter J.C."/>
            <person name="Munk A.C."/>
            <person name="Bruce D.C."/>
            <person name="Doggett N.A."/>
            <person name="Smith L.A."/>
            <person name="Marks J.D."/>
            <person name="Xie G."/>
            <person name="Brettin T.S."/>
        </authorList>
    </citation>
    <scope>NUCLEOTIDE SEQUENCE [LARGE SCALE GENOMIC DNA]</scope>
    <source>
        <strain>Loch Maree / Type A3</strain>
    </source>
</reference>
<proteinExistence type="inferred from homology"/>
<accession>B1KSM7</accession>
<evidence type="ECO:0000250" key="1"/>
<evidence type="ECO:0000255" key="2">
    <source>
        <dbReference type="HAMAP-Rule" id="MF_00118"/>
    </source>
</evidence>
<keyword id="KW-0963">Cytoplasm</keyword>
<keyword id="KW-0251">Elongation factor</keyword>
<keyword id="KW-0342">GTP-binding</keyword>
<keyword id="KW-0378">Hydrolase</keyword>
<keyword id="KW-0460">Magnesium</keyword>
<keyword id="KW-0479">Metal-binding</keyword>
<keyword id="KW-0547">Nucleotide-binding</keyword>
<keyword id="KW-0648">Protein biosynthesis</keyword>
<protein>
    <recommendedName>
        <fullName evidence="2">Elongation factor Tu</fullName>
        <shortName evidence="2">EF-Tu</shortName>
        <ecNumber evidence="2">3.6.5.3</ecNumber>
    </recommendedName>
</protein>
<organism>
    <name type="scientific">Clostridium botulinum (strain Loch Maree / Type A3)</name>
    <dbReference type="NCBI Taxonomy" id="498214"/>
    <lineage>
        <taxon>Bacteria</taxon>
        <taxon>Bacillati</taxon>
        <taxon>Bacillota</taxon>
        <taxon>Clostridia</taxon>
        <taxon>Eubacteriales</taxon>
        <taxon>Clostridiaceae</taxon>
        <taxon>Clostridium</taxon>
    </lineage>
</organism>
<gene>
    <name evidence="2" type="primary">tuf1</name>
    <name type="ordered locus">CLK_2926</name>
</gene>
<gene>
    <name evidence="2" type="primary">tuf2</name>
    <name type="ordered locus">CLK_2940</name>
</gene>